<reference key="1">
    <citation type="submission" date="2008-04" db="EMBL/GenBank/DDBJ databases">
        <title>Complete sequence of Clostridium botulinum strain Eklund.</title>
        <authorList>
            <person name="Brinkac L.M."/>
            <person name="Brown J.L."/>
            <person name="Bruce D."/>
            <person name="Detter C."/>
            <person name="Munk C."/>
            <person name="Smith L.A."/>
            <person name="Smith T.J."/>
            <person name="Sutton G."/>
            <person name="Brettin T.S."/>
        </authorList>
    </citation>
    <scope>NUCLEOTIDE SEQUENCE [LARGE SCALE GENOMIC DNA]</scope>
    <source>
        <strain>Eklund 17B / Type B</strain>
    </source>
</reference>
<name>METAA_CLOBB</name>
<dbReference type="EC" id="2.3.1.31" evidence="1"/>
<dbReference type="EMBL" id="CP001056">
    <property type="protein sequence ID" value="ACD24251.1"/>
    <property type="molecule type" value="Genomic_DNA"/>
</dbReference>
<dbReference type="SMR" id="B2TPE3"/>
<dbReference type="KEGG" id="cbk:CLL_A2913"/>
<dbReference type="PATRIC" id="fig|935198.13.peg.2876"/>
<dbReference type="HOGENOM" id="CLU_057851_0_1_9"/>
<dbReference type="UniPathway" id="UPA00051">
    <property type="reaction ID" value="UER00074"/>
</dbReference>
<dbReference type="Proteomes" id="UP000001195">
    <property type="component" value="Chromosome"/>
</dbReference>
<dbReference type="GO" id="GO:0005737">
    <property type="term" value="C:cytoplasm"/>
    <property type="evidence" value="ECO:0007669"/>
    <property type="project" value="UniProtKB-SubCell"/>
</dbReference>
<dbReference type="GO" id="GO:0004414">
    <property type="term" value="F:homoserine O-acetyltransferase activity"/>
    <property type="evidence" value="ECO:0007669"/>
    <property type="project" value="UniProtKB-EC"/>
</dbReference>
<dbReference type="GO" id="GO:0008899">
    <property type="term" value="F:homoserine O-succinyltransferase activity"/>
    <property type="evidence" value="ECO:0007669"/>
    <property type="project" value="UniProtKB-UniRule"/>
</dbReference>
<dbReference type="GO" id="GO:0019281">
    <property type="term" value="P:L-methionine biosynthetic process from homoserine via O-succinyl-L-homoserine and cystathionine"/>
    <property type="evidence" value="ECO:0007669"/>
    <property type="project" value="InterPro"/>
</dbReference>
<dbReference type="CDD" id="cd03131">
    <property type="entry name" value="GATase1_HTS"/>
    <property type="match status" value="1"/>
</dbReference>
<dbReference type="FunFam" id="3.40.50.880:FF:000004">
    <property type="entry name" value="Homoserine O-succinyltransferase"/>
    <property type="match status" value="1"/>
</dbReference>
<dbReference type="Gene3D" id="3.40.50.880">
    <property type="match status" value="1"/>
</dbReference>
<dbReference type="HAMAP" id="MF_00295">
    <property type="entry name" value="MetA_acyltransf"/>
    <property type="match status" value="1"/>
</dbReference>
<dbReference type="InterPro" id="IPR029062">
    <property type="entry name" value="Class_I_gatase-like"/>
</dbReference>
<dbReference type="InterPro" id="IPR005697">
    <property type="entry name" value="HST_MetA"/>
</dbReference>
<dbReference type="InterPro" id="IPR033752">
    <property type="entry name" value="MetA_family"/>
</dbReference>
<dbReference type="NCBIfam" id="TIGR01001">
    <property type="entry name" value="metA"/>
    <property type="match status" value="1"/>
</dbReference>
<dbReference type="PANTHER" id="PTHR20919">
    <property type="entry name" value="HOMOSERINE O-SUCCINYLTRANSFERASE"/>
    <property type="match status" value="1"/>
</dbReference>
<dbReference type="PANTHER" id="PTHR20919:SF0">
    <property type="entry name" value="HOMOSERINE O-SUCCINYLTRANSFERASE"/>
    <property type="match status" value="1"/>
</dbReference>
<dbReference type="Pfam" id="PF04204">
    <property type="entry name" value="HTS"/>
    <property type="match status" value="1"/>
</dbReference>
<dbReference type="PIRSF" id="PIRSF000450">
    <property type="entry name" value="H_ser_succinyltr"/>
    <property type="match status" value="1"/>
</dbReference>
<dbReference type="SUPFAM" id="SSF52317">
    <property type="entry name" value="Class I glutamine amidotransferase-like"/>
    <property type="match status" value="1"/>
</dbReference>
<protein>
    <recommendedName>
        <fullName evidence="1">Homoserine O-acetyltransferase</fullName>
        <shortName evidence="1">HAT</shortName>
        <ecNumber evidence="1">2.3.1.31</ecNumber>
    </recommendedName>
    <alternativeName>
        <fullName evidence="1">Homoserine transacetylase</fullName>
        <shortName evidence="1">HTA</shortName>
    </alternativeName>
</protein>
<proteinExistence type="inferred from homology"/>
<feature type="chain" id="PRO_1000115177" description="Homoserine O-acetyltransferase">
    <location>
        <begin position="1"/>
        <end position="306"/>
    </location>
</feature>
<feature type="active site" description="Acyl-thioester intermediate" evidence="1">
    <location>
        <position position="142"/>
    </location>
</feature>
<feature type="active site" description="Proton acceptor" evidence="1">
    <location>
        <position position="235"/>
    </location>
</feature>
<feature type="active site" evidence="1">
    <location>
        <position position="237"/>
    </location>
</feature>
<feature type="binding site" evidence="1">
    <location>
        <position position="163"/>
    </location>
    <ligand>
        <name>substrate</name>
    </ligand>
</feature>
<feature type="binding site" evidence="1">
    <location>
        <position position="192"/>
    </location>
    <ligand>
        <name>substrate</name>
    </ligand>
</feature>
<feature type="binding site" evidence="1">
    <location>
        <position position="249"/>
    </location>
    <ligand>
        <name>substrate</name>
    </ligand>
</feature>
<feature type="site" description="Important for acyl-CoA specificity" evidence="1">
    <location>
        <position position="111"/>
    </location>
</feature>
<feature type="site" description="Important for substrate specificity" evidence="1">
    <location>
        <position position="192"/>
    </location>
</feature>
<evidence type="ECO:0000255" key="1">
    <source>
        <dbReference type="HAMAP-Rule" id="MF_00295"/>
    </source>
</evidence>
<accession>B2TPE3</accession>
<comment type="function">
    <text evidence="1">Transfers an acetyl group from acetyl-CoA to L-homoserine, forming acetyl-L-homoserine.</text>
</comment>
<comment type="catalytic activity">
    <reaction evidence="1">
        <text>L-homoserine + acetyl-CoA = O-acetyl-L-homoserine + CoA</text>
        <dbReference type="Rhea" id="RHEA:13701"/>
        <dbReference type="ChEBI" id="CHEBI:57287"/>
        <dbReference type="ChEBI" id="CHEBI:57288"/>
        <dbReference type="ChEBI" id="CHEBI:57476"/>
        <dbReference type="ChEBI" id="CHEBI:57716"/>
        <dbReference type="EC" id="2.3.1.31"/>
    </reaction>
</comment>
<comment type="pathway">
    <text evidence="1">Amino-acid biosynthesis; L-methionine biosynthesis via de novo pathway; O-acetyl-L-homoserine from L-homoserine: step 1/1.</text>
</comment>
<comment type="subcellular location">
    <subcellularLocation>
        <location evidence="1">Cytoplasm</location>
    </subcellularLocation>
</comment>
<comment type="similarity">
    <text evidence="1">Belongs to the MetA family.</text>
</comment>
<gene>
    <name evidence="1" type="primary">metAA</name>
    <name type="ordered locus">CLL_A2913</name>
</gene>
<keyword id="KW-0012">Acyltransferase</keyword>
<keyword id="KW-0028">Amino-acid biosynthesis</keyword>
<keyword id="KW-0963">Cytoplasm</keyword>
<keyword id="KW-0486">Methionine biosynthesis</keyword>
<keyword id="KW-0808">Transferase</keyword>
<organism>
    <name type="scientific">Clostridium botulinum (strain Eklund 17B / Type B)</name>
    <dbReference type="NCBI Taxonomy" id="935198"/>
    <lineage>
        <taxon>Bacteria</taxon>
        <taxon>Bacillati</taxon>
        <taxon>Bacillota</taxon>
        <taxon>Clostridia</taxon>
        <taxon>Eubacteriales</taxon>
        <taxon>Clostridiaceae</taxon>
        <taxon>Clostridium</taxon>
    </lineage>
</organism>
<sequence>MPIKIPTELPAFKVLSNENIFVMNDSRAKTQDIRPLKIAILNLMPKKILAENQLLRHLSNTPLQVEVKLIQTKSYVSQNTPIEHLEKFYTYFDDIKDEKFDGLIITGAPVEQMAFEDITYWNELTEIMKWSKSNVFSTLHICWGAQAGLYYHYDIQKYKLEKKISGVFSHWVNDENADLTRGLDDIFYVPHSRHTEVKKEDINKISELEILSESKEAGIFIVATKDRRKIFFMGHPEYDRNTLKEEYMRDREKGDNVDIPQNYFVDNDINSTPKFTWRGSSNIIFGNWLNYCVYQNTPYDINDISK</sequence>